<keyword id="KW-0025">Alternative splicing</keyword>
<keyword id="KW-0597">Phosphoprotein</keyword>
<keyword id="KW-1267">Proteomics identification</keyword>
<keyword id="KW-1185">Reference proteome</keyword>
<keyword id="KW-0727">SH2 domain</keyword>
<proteinExistence type="evidence at protein level"/>
<feature type="chain" id="PRO_0000097734" description="SHC-transforming protein 3">
    <location>
        <begin position="1"/>
        <end position="594"/>
    </location>
</feature>
<feature type="domain" description="PID" evidence="2">
    <location>
        <begin position="149"/>
        <end position="334"/>
    </location>
</feature>
<feature type="domain" description="SH2" evidence="3">
    <location>
        <begin position="499"/>
        <end position="590"/>
    </location>
</feature>
<feature type="region of interest" description="Disordered" evidence="4">
    <location>
        <begin position="98"/>
        <end position="147"/>
    </location>
</feature>
<feature type="region of interest" description="CH1">
    <location>
        <begin position="335"/>
        <end position="498"/>
    </location>
</feature>
<feature type="region of interest" description="Disordered" evidence="4">
    <location>
        <begin position="351"/>
        <end position="373"/>
    </location>
</feature>
<feature type="region of interest" description="Disordered" evidence="4">
    <location>
        <begin position="386"/>
        <end position="405"/>
    </location>
</feature>
<feature type="compositionally biased region" description="Low complexity" evidence="4">
    <location>
        <begin position="101"/>
        <end position="124"/>
    </location>
</feature>
<feature type="compositionally biased region" description="Polar residues" evidence="4">
    <location>
        <begin position="393"/>
        <end position="405"/>
    </location>
</feature>
<feature type="modified residue" description="Phosphoserine" evidence="1">
    <location>
        <position position="402"/>
    </location>
</feature>
<feature type="splice variant" id="VSP_009805" description="In isoform p52." evidence="7 8">
    <original>MLPRTKYNRFRNDSVTSVDDLLHSLSVSGGGGKVSAARATPAAAPYLVSGEALRKAPDDGPGSLGHLLHKVSHLKLSSSGLRGLSSAARERAGARLSGSCSAPSLAAPDGSAPSAPRAPAMSAARKGRPGDEPLPRPPRGAPHASDQVLGPGVTY</original>
    <variation>MHARAAASVMDICRIRLLIRLTIGLERPPGQV</variation>
    <location>
        <begin position="1"/>
        <end position="155"/>
    </location>
</feature>
<feature type="sequence conflict" description="In Ref. 4; AAH26314." evidence="9" ref="4">
    <original>D</original>
    <variation>V</variation>
    <location>
        <position position="58"/>
    </location>
</feature>
<feature type="sequence conflict" description="In Ref. 2." evidence="9" ref="2">
    <original>K</original>
    <variation>R</variation>
    <location>
        <position position="201"/>
    </location>
</feature>
<feature type="sequence conflict" description="In Ref. 4; AAH26314." evidence="9" ref="4">
    <original>A</original>
    <variation>T</variation>
    <location>
        <position position="271"/>
    </location>
</feature>
<feature type="sequence conflict" description="In Ref. 2." evidence="9" ref="2">
    <original>I</original>
    <variation>E</variation>
    <location>
        <position position="553"/>
    </location>
</feature>
<feature type="sequence conflict" description="In Ref. 4; AAH26314." evidence="9" ref="4">
    <original>R</original>
    <variation>Q</variation>
    <location>
        <position position="554"/>
    </location>
</feature>
<feature type="sequence conflict" description="In Ref. 2." evidence="9" ref="2">
    <original>KQ</original>
    <variation>NE</variation>
    <location>
        <begin position="593"/>
        <end position="594"/>
    </location>
</feature>
<accession>Q92529</accession>
<accession>Q5T7I7</accession>
<accession>Q8TAP2</accession>
<accession>Q9UCX5</accession>
<comment type="function">
    <text>Signaling adapter that couples activated growth factor receptors to signaling pathway in neurons. Involved in the signal transduction pathways of neurotrophin-activated Trk receptors in cortical neurons.</text>
</comment>
<comment type="subunit">
    <text evidence="5">Interacts with the Trk receptors in a phosphotyrosine-dependent manner. Once activated, binds to GRB2. Interacts with activated EGF receptors.</text>
</comment>
<comment type="interaction">
    <interactant intactId="EBI-79084">
        <id>Q92529</id>
    </interactant>
    <interactant intactId="EBI-12102070">
        <id>Q9NXR5-2</id>
        <label>ANKRD10</label>
    </interactant>
    <organismsDiffer>false</organismsDiffer>
    <experiments>3</experiments>
</comment>
<comment type="interaction">
    <interactant intactId="EBI-79084">
        <id>Q92529</id>
    </interactant>
    <interactant intactId="EBI-77613">
        <id>P05067</id>
        <label>APP</label>
    </interactant>
    <organismsDiffer>false</organismsDiffer>
    <experiments>5</experiments>
</comment>
<comment type="interaction">
    <interactant intactId="EBI-79084">
        <id>Q92529</id>
    </interactant>
    <interactant intactId="EBI-19946665">
        <id>Q86U10</id>
        <label>ASPG</label>
    </interactant>
    <organismsDiffer>false</organismsDiffer>
    <experiments>3</experiments>
</comment>
<comment type="interaction">
    <interactant intactId="EBI-79084">
        <id>Q92529</id>
    </interactant>
    <interactant intactId="EBI-3919268">
        <id>Q96LC9</id>
        <label>BMF</label>
    </interactant>
    <organismsDiffer>false</organismsDiffer>
    <experiments>3</experiments>
</comment>
<comment type="interaction">
    <interactant intactId="EBI-79084">
        <id>Q92529</id>
    </interactant>
    <interactant intactId="EBI-395261">
        <id>P24863</id>
        <label>CCNC</label>
    </interactant>
    <organismsDiffer>false</organismsDiffer>
    <experiments>3</experiments>
</comment>
<comment type="interaction">
    <interactant intactId="EBI-79084">
        <id>Q92529</id>
    </interactant>
    <interactant intactId="EBI-1773949">
        <id>Q9BXL8</id>
        <label>CDCA4</label>
    </interactant>
    <organismsDiffer>false</organismsDiffer>
    <experiments>3</experiments>
</comment>
<comment type="interaction">
    <interactant intactId="EBI-79084">
        <id>Q92529</id>
    </interactant>
    <interactant intactId="EBI-4314501">
        <id>P40199</id>
        <label>CEACAM6</label>
    </interactant>
    <organismsDiffer>false</organismsDiffer>
    <experiments>3</experiments>
</comment>
<comment type="interaction">
    <interactant intactId="EBI-79084">
        <id>Q92529</id>
    </interactant>
    <interactant intactId="EBI-486838">
        <id>Q7L5N1</id>
        <label>COPS6</label>
    </interactant>
    <organismsDiffer>false</organismsDiffer>
    <experiments>3</experiments>
</comment>
<comment type="interaction">
    <interactant intactId="EBI-79084">
        <id>Q92529</id>
    </interactant>
    <interactant intactId="EBI-6873363">
        <id>Q8WUE5</id>
        <label>CT55</label>
    </interactant>
    <organismsDiffer>false</organismsDiffer>
    <experiments>3</experiments>
</comment>
<comment type="interaction">
    <interactant intactId="EBI-79084">
        <id>Q92529</id>
    </interactant>
    <interactant intactId="EBI-10694655">
        <id>Q7L591-3</id>
        <label>DOK3</label>
    </interactant>
    <organismsDiffer>false</organismsDiffer>
    <experiments>3</experiments>
</comment>
<comment type="interaction">
    <interactant intactId="EBI-79084">
        <id>Q92529</id>
    </interactant>
    <interactant intactId="EBI-641062">
        <id>P04626</id>
        <label>ERBB2</label>
    </interactant>
    <organismsDiffer>false</organismsDiffer>
    <experiments>2</experiments>
</comment>
<comment type="interaction">
    <interactant intactId="EBI-79084">
        <id>Q92529</id>
    </interactant>
    <interactant intactId="EBI-720706">
        <id>P21860</id>
        <label>ERBB3</label>
    </interactant>
    <organismsDiffer>false</organismsDiffer>
    <experiments>2</experiments>
</comment>
<comment type="interaction">
    <interactant intactId="EBI-79084">
        <id>Q92529</id>
    </interactant>
    <interactant intactId="EBI-18138793">
        <id>Q9C0B1-2</id>
        <label>FTO</label>
    </interactant>
    <organismsDiffer>false</organismsDiffer>
    <experiments>3</experiments>
</comment>
<comment type="interaction">
    <interactant intactId="EBI-79084">
        <id>Q92529</id>
    </interactant>
    <interactant intactId="EBI-618309">
        <id>Q08379</id>
        <label>GOLGA2</label>
    </interactant>
    <organismsDiffer>false</organismsDiffer>
    <experiments>3</experiments>
</comment>
<comment type="interaction">
    <interactant intactId="EBI-79084">
        <id>Q92529</id>
    </interactant>
    <interactant intactId="EBI-5916454">
        <id>A6NEM1</id>
        <label>GOLGA6L9</label>
    </interactant>
    <organismsDiffer>false</organismsDiffer>
    <experiments>3</experiments>
</comment>
<comment type="interaction">
    <interactant intactId="EBI-79084">
        <id>Q92529</id>
    </interactant>
    <interactant intactId="EBI-1379503">
        <id>P10721</id>
        <label>KIT</label>
    </interactant>
    <organismsDiffer>false</organismsDiffer>
    <experiments>3</experiments>
</comment>
<comment type="interaction">
    <interactant intactId="EBI-79084">
        <id>Q92529</id>
    </interactant>
    <interactant intactId="EBI-948001">
        <id>Q15323</id>
        <label>KRT31</label>
    </interactant>
    <organismsDiffer>false</organismsDiffer>
    <experiments>6</experiments>
</comment>
<comment type="interaction">
    <interactant intactId="EBI-79084">
        <id>Q92529</id>
    </interactant>
    <interactant intactId="EBI-1049638">
        <id>Q14525</id>
        <label>KRT33B</label>
    </interactant>
    <organismsDiffer>false</organismsDiffer>
    <experiments>3</experiments>
</comment>
<comment type="interaction">
    <interactant intactId="EBI-79084">
        <id>Q92529</id>
    </interactant>
    <interactant intactId="EBI-1047093">
        <id>O76011</id>
        <label>KRT34</label>
    </interactant>
    <organismsDiffer>false</organismsDiffer>
    <experiments>3</experiments>
</comment>
<comment type="interaction">
    <interactant intactId="EBI-79084">
        <id>Q92529</id>
    </interactant>
    <interactant intactId="EBI-1058674">
        <id>Q92764</id>
        <label>KRT35</label>
    </interactant>
    <organismsDiffer>false</organismsDiffer>
    <experiments>3</experiments>
</comment>
<comment type="interaction">
    <interactant intactId="EBI-79084">
        <id>Q92529</id>
    </interactant>
    <interactant intactId="EBI-11958242">
        <id>Q6A163</id>
        <label>KRT39</label>
    </interactant>
    <organismsDiffer>false</organismsDiffer>
    <experiments>3</experiments>
</comment>
<comment type="interaction">
    <interactant intactId="EBI-79084">
        <id>Q92529</id>
    </interactant>
    <interactant intactId="EBI-10171697">
        <id>Q6A162</id>
        <label>KRT40</label>
    </interactant>
    <organismsDiffer>false</organismsDiffer>
    <experiments>6</experiments>
</comment>
<comment type="interaction">
    <interactant intactId="EBI-79084">
        <id>Q92529</id>
    </interactant>
    <interactant intactId="EBI-9996498">
        <id>O43790</id>
        <label>KRT86</label>
    </interactant>
    <organismsDiffer>false</organismsDiffer>
    <experiments>3</experiments>
</comment>
<comment type="interaction">
    <interactant intactId="EBI-79084">
        <id>Q92529</id>
    </interactant>
    <interactant intactId="EBI-713832">
        <id>Q6P1K2</id>
        <label>PMF1</label>
    </interactant>
    <organismsDiffer>false</organismsDiffer>
    <experiments>3</experiments>
</comment>
<comment type="interaction">
    <interactant intactId="EBI-79084">
        <id>Q92529</id>
    </interactant>
    <interactant intactId="EBI-302345">
        <id>Q8ND90</id>
        <label>PNMA1</label>
    </interactant>
    <organismsDiffer>false</organismsDiffer>
    <experiments>3</experiments>
</comment>
<comment type="interaction">
    <interactant intactId="EBI-79084">
        <id>Q92529</id>
    </interactant>
    <interactant intactId="EBI-10293968">
        <id>Q96T49</id>
        <label>PPP1R16B</label>
    </interactant>
    <organismsDiffer>false</organismsDiffer>
    <experiments>3</experiments>
</comment>
<comment type="interaction">
    <interactant intactId="EBI-79084">
        <id>Q92529</id>
    </interactant>
    <interactant intactId="EBI-2805516">
        <id>P31321</id>
        <label>PRKAR1B</label>
    </interactant>
    <organismsDiffer>false</organismsDiffer>
    <experiments>3</experiments>
</comment>
<comment type="interaction">
    <interactant intactId="EBI-79084">
        <id>Q92529</id>
    </interactant>
    <interactant intactId="EBI-359304">
        <id>P48556</id>
        <label>PSMD8</label>
    </interactant>
    <organismsDiffer>false</organismsDiffer>
    <experiments>3</experiments>
</comment>
<comment type="interaction">
    <interactant intactId="EBI-79084">
        <id>Q92529</id>
    </interactant>
    <interactant intactId="EBI-10829018">
        <id>Q04864-2</id>
        <label>REL</label>
    </interactant>
    <organismsDiffer>false</organismsDiffer>
    <experiments>3</experiments>
</comment>
<comment type="interaction">
    <interactant intactId="EBI-79084">
        <id>Q92529</id>
    </interactant>
    <interactant intactId="EBI-347919">
        <id>Q9H7B4</id>
        <label>SMYD3</label>
    </interactant>
    <organismsDiffer>false</organismsDiffer>
    <experiments>3</experiments>
</comment>
<comment type="interaction">
    <interactant intactId="EBI-79084">
        <id>Q92529</id>
    </interactant>
    <interactant intactId="EBI-714135">
        <id>O75558</id>
        <label>STX11</label>
    </interactant>
    <organismsDiffer>false</organismsDiffer>
    <experiments>3</experiments>
</comment>
<comment type="interaction">
    <interactant intactId="EBI-79084">
        <id>Q92529</id>
    </interactant>
    <interactant intactId="EBI-359224">
        <id>Q13077</id>
        <label>TRAF1</label>
    </interactant>
    <organismsDiffer>false</organismsDiffer>
    <experiments>3</experiments>
</comment>
<comment type="interaction">
    <interactant intactId="EBI-79084">
        <id>Q92529</id>
    </interactant>
    <interactant intactId="EBI-355744">
        <id>Q12933</id>
        <label>TRAF2</label>
    </interactant>
    <organismsDiffer>false</organismsDiffer>
    <experiments>3</experiments>
</comment>
<comment type="interaction">
    <interactant intactId="EBI-79084">
        <id>Q92529</id>
    </interactant>
    <interactant intactId="EBI-17716262">
        <id>Q9UPQ4-2</id>
        <label>TRIM35</label>
    </interactant>
    <organismsDiffer>false</organismsDiffer>
    <experiments>3</experiments>
</comment>
<comment type="interaction">
    <interactant intactId="EBI-79084">
        <id>Q92529</id>
    </interactant>
    <interactant intactId="EBI-2130429">
        <id>Q9BYV2</id>
        <label>TRIM54</label>
    </interactant>
    <organismsDiffer>false</organismsDiffer>
    <experiments>3</experiments>
</comment>
<comment type="interaction">
    <interactant intactId="EBI-79084">
        <id>Q92529</id>
    </interactant>
    <interactant intactId="EBI-12806590">
        <id>Q86WV8</id>
        <label>TSC1</label>
    </interactant>
    <organismsDiffer>false</organismsDiffer>
    <experiments>5</experiments>
</comment>
<comment type="interaction">
    <interactant intactId="EBI-79084">
        <id>Q92529</id>
    </interactant>
    <interactant intactId="EBI-2514383">
        <id>Q5T6F2</id>
        <label>UBAP2</label>
    </interactant>
    <organismsDiffer>false</organismsDiffer>
    <experiments>3</experiments>
</comment>
<comment type="interaction">
    <interactant intactId="EBI-79084">
        <id>Q92529</id>
    </interactant>
    <interactant intactId="EBI-739895">
        <id>Q8N6Y0</id>
        <label>USHBP1</label>
    </interactant>
    <organismsDiffer>false</organismsDiffer>
    <experiments>3</experiments>
</comment>
<comment type="interaction">
    <interactant intactId="EBI-79084">
        <id>Q92529</id>
    </interactant>
    <interactant intactId="EBI-11975223">
        <id>Q70EL1-9</id>
        <label>USP54</label>
    </interactant>
    <organismsDiffer>false</organismsDiffer>
    <experiments>3</experiments>
</comment>
<comment type="interaction">
    <interactant intactId="EBI-79084">
        <id>Q92529</id>
    </interactant>
    <interactant intactId="EBI-12146727">
        <id>Q9UK41-2</id>
        <label>VPS28</label>
    </interactant>
    <organismsDiffer>false</organismsDiffer>
    <experiments>3</experiments>
</comment>
<comment type="interaction">
    <interactant intactId="EBI-79084">
        <id>Q92529</id>
    </interactant>
    <interactant intactId="EBI-12040603">
        <id>Q9NZC7-5</id>
        <label>WWOX</label>
    </interactant>
    <organismsDiffer>false</organismsDiffer>
    <experiments>5</experiments>
</comment>
<comment type="interaction">
    <interactant intactId="EBI-79084">
        <id>Q92529</id>
    </interactant>
    <interactant intactId="EBI-11721624">
        <id>P62699</id>
        <label>YPEL5</label>
    </interactant>
    <organismsDiffer>false</organismsDiffer>
    <experiments>3</experiments>
</comment>
<comment type="interaction">
    <interactant intactId="EBI-79084">
        <id>Q92529</id>
    </interactant>
    <interactant intactId="EBI-12030590">
        <id>Q9H0C1</id>
        <label>ZMYND12</label>
    </interactant>
    <organismsDiffer>false</organismsDiffer>
    <experiments>3</experiments>
</comment>
<comment type="alternative products">
    <event type="alternative splicing"/>
    <isoform>
        <id>Q92529-1</id>
        <name>p64</name>
        <sequence type="displayed"/>
    </isoform>
    <isoform>
        <id>Q92529-2</id>
        <name>p52</name>
        <sequence type="described" ref="VSP_009805"/>
    </isoform>
</comment>
<comment type="tissue specificity">
    <text evidence="6">Mainly expressed in brain. Hardly detectable in other tissues, except in pancreas. Highly expressed in the cerebral cortex, frontal and temporal lobes, occipital pole, hippocampus, caudate nucleus and amygdala. Expressed at low level in the cerebellum, medulla and spinal cord.</text>
</comment>
<comment type="PTM">
    <text evidence="5">Tyrosine phosphorylated.</text>
</comment>
<sequence>MLPRTKYNRFRNDSVTSVDDLLHSLSVSGGGGKVSAARATPAAAPYLVSGEALRKAPDDGPGSLGHLLHKVSHLKLSSSGLRGLSSAARERAGARLSGSCSAPSLAAPDGSAPSAPRAPAMSAARKGRPGDEPLPRPPRGAPHASDQVLGPGVTYVVKYLGCIEVLRSMRSLDFSTRTQITREAISRVCEAVPGAKGAFKKRKPPSKMLSSILGKSNLQFAGMSISLTISTASLNLRTPDSKQIIANHHMRSISFASGGDPDTTDYVAYVAKDPVNRRACHILECCDGLAQDVIGSIGQAFELRFKQYLQCPTKIPALHDRMQSLDEPWTEEEGDGSDHPYYNSIPSKMPPPGGFLDTRLKPRPHAPDTAQFAGKEQTYYQGRHLGDTFGEDWQQTPLRQGSSDIYSTPEGKLHVAPTGEAPTYVNTQQIPPQAWPAAVSSAESSPRKDLFDMKPFEDALKNQPLGPVLSKAASVECISPVSPRAPDAKMLEELQAETWYQGEMSRKEAEGLLEKDGDFLVRKSTTNPGSFVLTGMHNGQAKHLLLVDPEGTIRTKDRVFDSISHLINHHLESSLPIVSAGSELCLQQPVERKQ</sequence>
<protein>
    <recommendedName>
        <fullName>SHC-transforming protein 3</fullName>
    </recommendedName>
    <alternativeName>
        <fullName>Neuronal Shc</fullName>
        <shortName>N-Shc</shortName>
    </alternativeName>
    <alternativeName>
        <fullName>Protein Rai</fullName>
    </alternativeName>
    <alternativeName>
        <fullName>SHC-transforming protein C</fullName>
    </alternativeName>
    <alternativeName>
        <fullName>Src homology 2 domain-containing-transforming protein C3</fullName>
        <shortName>SH2 domain protein C3</shortName>
    </alternativeName>
</protein>
<gene>
    <name type="primary">SHC3</name>
    <name type="synonym">NSHC</name>
    <name type="synonym">SHCC</name>
</gene>
<reference key="1">
    <citation type="journal article" date="1996" name="Oncogene">
        <title>N-Shc: a neural-specific adapter molecule that mediates signaling from neurotrophin/Trk to Ras/MAPK pathway.</title>
        <authorList>
            <person name="Nakamura T."/>
            <person name="Sanokawa R."/>
            <person name="Sasaki Y."/>
            <person name="Ayusawa D."/>
            <person name="Oishi M."/>
            <person name="Mori N."/>
        </authorList>
    </citation>
    <scope>NUCLEOTIDE SEQUENCE [MRNA] (ISOFORMS P64 AND P52)</scope>
    <scope>TISSUE SPECIFICITY</scope>
    <source>
        <tissue>Brain</tissue>
    </source>
</reference>
<reference key="2">
    <citation type="journal article" date="1996" name="Oncogene">
        <title>A family of Shc related proteins with conserved PTB, CH1 and SH2 regions.</title>
        <authorList>
            <person name="Pelicci G."/>
            <person name="Dente L."/>
            <person name="De Giuseppe A."/>
            <person name="Verducci-Galletti B."/>
            <person name="Giuli S."/>
            <person name="Mele S."/>
            <person name="Vetriani C."/>
            <person name="Giorgio M."/>
            <person name="Pandolfi P.P."/>
            <person name="Cesareni G."/>
            <person name="Pelicci P.-G."/>
        </authorList>
    </citation>
    <scope>NUCLEOTIDE SEQUENCE [MRNA] (ISOFORM P52)</scope>
    <source>
        <tissue>Fetal brain</tissue>
    </source>
</reference>
<reference key="3">
    <citation type="journal article" date="2004" name="Nature">
        <title>DNA sequence and analysis of human chromosome 9.</title>
        <authorList>
            <person name="Humphray S.J."/>
            <person name="Oliver K."/>
            <person name="Hunt A.R."/>
            <person name="Plumb R.W."/>
            <person name="Loveland J.E."/>
            <person name="Howe K.L."/>
            <person name="Andrews T.D."/>
            <person name="Searle S."/>
            <person name="Hunt S.E."/>
            <person name="Scott C.E."/>
            <person name="Jones M.C."/>
            <person name="Ainscough R."/>
            <person name="Almeida J.P."/>
            <person name="Ambrose K.D."/>
            <person name="Ashwell R.I.S."/>
            <person name="Babbage A.K."/>
            <person name="Babbage S."/>
            <person name="Bagguley C.L."/>
            <person name="Bailey J."/>
            <person name="Banerjee R."/>
            <person name="Barker D.J."/>
            <person name="Barlow K.F."/>
            <person name="Bates K."/>
            <person name="Beasley H."/>
            <person name="Beasley O."/>
            <person name="Bird C.P."/>
            <person name="Bray-Allen S."/>
            <person name="Brown A.J."/>
            <person name="Brown J.Y."/>
            <person name="Burford D."/>
            <person name="Burrill W."/>
            <person name="Burton J."/>
            <person name="Carder C."/>
            <person name="Carter N.P."/>
            <person name="Chapman J.C."/>
            <person name="Chen Y."/>
            <person name="Clarke G."/>
            <person name="Clark S.Y."/>
            <person name="Clee C.M."/>
            <person name="Clegg S."/>
            <person name="Collier R.E."/>
            <person name="Corby N."/>
            <person name="Crosier M."/>
            <person name="Cummings A.T."/>
            <person name="Davies J."/>
            <person name="Dhami P."/>
            <person name="Dunn M."/>
            <person name="Dutta I."/>
            <person name="Dyer L.W."/>
            <person name="Earthrowl M.E."/>
            <person name="Faulkner L."/>
            <person name="Fleming C.J."/>
            <person name="Frankish A."/>
            <person name="Frankland J.A."/>
            <person name="French L."/>
            <person name="Fricker D.G."/>
            <person name="Garner P."/>
            <person name="Garnett J."/>
            <person name="Ghori J."/>
            <person name="Gilbert J.G.R."/>
            <person name="Glison C."/>
            <person name="Grafham D.V."/>
            <person name="Gribble S."/>
            <person name="Griffiths C."/>
            <person name="Griffiths-Jones S."/>
            <person name="Grocock R."/>
            <person name="Guy J."/>
            <person name="Hall R.E."/>
            <person name="Hammond S."/>
            <person name="Harley J.L."/>
            <person name="Harrison E.S.I."/>
            <person name="Hart E.A."/>
            <person name="Heath P.D."/>
            <person name="Henderson C.D."/>
            <person name="Hopkins B.L."/>
            <person name="Howard P.J."/>
            <person name="Howden P.J."/>
            <person name="Huckle E."/>
            <person name="Johnson C."/>
            <person name="Johnson D."/>
            <person name="Joy A.A."/>
            <person name="Kay M."/>
            <person name="Keenan S."/>
            <person name="Kershaw J.K."/>
            <person name="Kimberley A.M."/>
            <person name="King A."/>
            <person name="Knights A."/>
            <person name="Laird G.K."/>
            <person name="Langford C."/>
            <person name="Lawlor S."/>
            <person name="Leongamornlert D.A."/>
            <person name="Leversha M."/>
            <person name="Lloyd C."/>
            <person name="Lloyd D.M."/>
            <person name="Lovell J."/>
            <person name="Martin S."/>
            <person name="Mashreghi-Mohammadi M."/>
            <person name="Matthews L."/>
            <person name="McLaren S."/>
            <person name="McLay K.E."/>
            <person name="McMurray A."/>
            <person name="Milne S."/>
            <person name="Nickerson T."/>
            <person name="Nisbett J."/>
            <person name="Nordsiek G."/>
            <person name="Pearce A.V."/>
            <person name="Peck A.I."/>
            <person name="Porter K.M."/>
            <person name="Pandian R."/>
            <person name="Pelan S."/>
            <person name="Phillimore B."/>
            <person name="Povey S."/>
            <person name="Ramsey Y."/>
            <person name="Rand V."/>
            <person name="Scharfe M."/>
            <person name="Sehra H.K."/>
            <person name="Shownkeen R."/>
            <person name="Sims S.K."/>
            <person name="Skuce C.D."/>
            <person name="Smith M."/>
            <person name="Steward C.A."/>
            <person name="Swarbreck D."/>
            <person name="Sycamore N."/>
            <person name="Tester J."/>
            <person name="Thorpe A."/>
            <person name="Tracey A."/>
            <person name="Tromans A."/>
            <person name="Thomas D.W."/>
            <person name="Wall M."/>
            <person name="Wallis J.M."/>
            <person name="West A.P."/>
            <person name="Whitehead S.L."/>
            <person name="Willey D.L."/>
            <person name="Williams S.A."/>
            <person name="Wilming L."/>
            <person name="Wray P.W."/>
            <person name="Young L."/>
            <person name="Ashurst J.L."/>
            <person name="Coulson A."/>
            <person name="Blocker H."/>
            <person name="Durbin R.M."/>
            <person name="Sulston J.E."/>
            <person name="Hubbard T."/>
            <person name="Jackson M.J."/>
            <person name="Bentley D.R."/>
            <person name="Beck S."/>
            <person name="Rogers J."/>
            <person name="Dunham I."/>
        </authorList>
    </citation>
    <scope>NUCLEOTIDE SEQUENCE [LARGE SCALE GENOMIC DNA]</scope>
</reference>
<reference key="4">
    <citation type="journal article" date="2004" name="Genome Res.">
        <title>The status, quality, and expansion of the NIH full-length cDNA project: the Mammalian Gene Collection (MGC).</title>
        <authorList>
            <consortium name="The MGC Project Team"/>
        </authorList>
    </citation>
    <scope>NUCLEOTIDE SEQUENCE [LARGE SCALE MRNA] (ISOFORM P64)</scope>
    <source>
        <tissue>Brain</tissue>
    </source>
</reference>
<reference key="5">
    <citation type="journal article" date="2002" name="J. Biol. Chem.">
        <title>ShcB and ShcC activation by the Trk family of receptor tyrosine kinases.</title>
        <authorList>
            <person name="Liu H.Y."/>
            <person name="Meakin S.O."/>
        </authorList>
    </citation>
    <scope>PHOSPHORYLATION</scope>
    <scope>INTERACTION WITH THE TRK RECEPTORS</scope>
</reference>
<dbReference type="EMBL" id="D84361">
    <property type="protein sequence ID" value="BAA12322.1"/>
    <property type="molecule type" value="mRNA"/>
</dbReference>
<dbReference type="EMBL" id="D84361">
    <property type="protein sequence ID" value="BAA12323.1"/>
    <property type="molecule type" value="mRNA"/>
</dbReference>
<dbReference type="EMBL" id="AL160054">
    <property type="status" value="NOT_ANNOTATED_CDS"/>
    <property type="molecule type" value="Genomic_DNA"/>
</dbReference>
<dbReference type="EMBL" id="AL353150">
    <property type="status" value="NOT_ANNOTATED_CDS"/>
    <property type="molecule type" value="Genomic_DNA"/>
</dbReference>
<dbReference type="EMBL" id="BC026314">
    <property type="protein sequence ID" value="AAH26314.1"/>
    <property type="molecule type" value="mRNA"/>
</dbReference>
<dbReference type="CCDS" id="CCDS6681.1">
    <molecule id="Q92529-1"/>
</dbReference>
<dbReference type="RefSeq" id="NP_058544.3">
    <molecule id="Q92529-1"/>
    <property type="nucleotide sequence ID" value="NM_016848.5"/>
</dbReference>
<dbReference type="SMR" id="Q92529"/>
<dbReference type="BioGRID" id="119752">
    <property type="interactions" value="64"/>
</dbReference>
<dbReference type="CORUM" id="Q92529"/>
<dbReference type="FunCoup" id="Q92529">
    <property type="interactions" value="1230"/>
</dbReference>
<dbReference type="IntAct" id="Q92529">
    <property type="interactions" value="51"/>
</dbReference>
<dbReference type="MINT" id="Q92529"/>
<dbReference type="STRING" id="9606.ENSP00000364995"/>
<dbReference type="GlyGen" id="Q92529">
    <property type="glycosylation" value="2 sites, 1 O-linked glycan (1 site)"/>
</dbReference>
<dbReference type="iPTMnet" id="Q92529"/>
<dbReference type="PhosphoSitePlus" id="Q92529"/>
<dbReference type="BioMuta" id="SHC3"/>
<dbReference type="DMDM" id="48474922"/>
<dbReference type="jPOST" id="Q92529"/>
<dbReference type="MassIVE" id="Q92529"/>
<dbReference type="PaxDb" id="9606-ENSP00000364995"/>
<dbReference type="PeptideAtlas" id="Q92529"/>
<dbReference type="ProteomicsDB" id="75289">
    <molecule id="Q92529-1"/>
</dbReference>
<dbReference type="ProteomicsDB" id="75290">
    <molecule id="Q92529-2"/>
</dbReference>
<dbReference type="Antibodypedia" id="27964">
    <property type="antibodies" value="227 antibodies from 29 providers"/>
</dbReference>
<dbReference type="DNASU" id="53358"/>
<dbReference type="Ensembl" id="ENST00000375835.9">
    <molecule id="Q92529-1"/>
    <property type="protein sequence ID" value="ENSP00000364995.4"/>
    <property type="gene ID" value="ENSG00000148082.10"/>
</dbReference>
<dbReference type="GeneID" id="53358"/>
<dbReference type="KEGG" id="hsa:53358"/>
<dbReference type="MANE-Select" id="ENST00000375835.9">
    <property type="protein sequence ID" value="ENSP00000364995.4"/>
    <property type="RefSeq nucleotide sequence ID" value="NM_016848.6"/>
    <property type="RefSeq protein sequence ID" value="NP_058544.3"/>
</dbReference>
<dbReference type="UCSC" id="uc004aqf.2">
    <molecule id="Q92529-1"/>
    <property type="organism name" value="human"/>
</dbReference>
<dbReference type="AGR" id="HGNC:18181"/>
<dbReference type="CTD" id="53358"/>
<dbReference type="DisGeNET" id="53358"/>
<dbReference type="GeneCards" id="SHC3"/>
<dbReference type="HGNC" id="HGNC:18181">
    <property type="gene designation" value="SHC3"/>
</dbReference>
<dbReference type="HPA" id="ENSG00000148082">
    <property type="expression patterns" value="Tissue enriched (brain)"/>
</dbReference>
<dbReference type="MIM" id="605263">
    <property type="type" value="gene"/>
</dbReference>
<dbReference type="neXtProt" id="NX_Q92529"/>
<dbReference type="OpenTargets" id="ENSG00000148082"/>
<dbReference type="PharmGKB" id="PA134913435"/>
<dbReference type="VEuPathDB" id="HostDB:ENSG00000148082"/>
<dbReference type="eggNOG" id="KOG3697">
    <property type="taxonomic scope" value="Eukaryota"/>
</dbReference>
<dbReference type="GeneTree" id="ENSGT00950000182870"/>
<dbReference type="HOGENOM" id="CLU_029532_2_1_1"/>
<dbReference type="InParanoid" id="Q92529"/>
<dbReference type="OMA" id="KTWSEEM"/>
<dbReference type="OrthoDB" id="9938362at2759"/>
<dbReference type="PAN-GO" id="Q92529">
    <property type="GO annotations" value="3 GO annotations based on evolutionary models"/>
</dbReference>
<dbReference type="PhylomeDB" id="Q92529"/>
<dbReference type="TreeFam" id="TF315807"/>
<dbReference type="PathwayCommons" id="Q92529"/>
<dbReference type="Reactome" id="R-HSA-167044">
    <property type="pathway name" value="Signalling to RAS"/>
</dbReference>
<dbReference type="Reactome" id="R-HSA-5673001">
    <property type="pathway name" value="RAF/MAP kinase cascade"/>
</dbReference>
<dbReference type="Reactome" id="R-HSA-8853659">
    <property type="pathway name" value="RET signaling"/>
</dbReference>
<dbReference type="SignaLink" id="Q92529"/>
<dbReference type="SIGNOR" id="Q92529"/>
<dbReference type="BioGRID-ORCS" id="53358">
    <property type="hits" value="15 hits in 1151 CRISPR screens"/>
</dbReference>
<dbReference type="ChiTaRS" id="SHC3">
    <property type="organism name" value="human"/>
</dbReference>
<dbReference type="GeneWiki" id="SHC3"/>
<dbReference type="GenomeRNAi" id="53358"/>
<dbReference type="Pharos" id="Q92529">
    <property type="development level" value="Tbio"/>
</dbReference>
<dbReference type="PRO" id="PR:Q92529"/>
<dbReference type="Proteomes" id="UP000005640">
    <property type="component" value="Chromosome 9"/>
</dbReference>
<dbReference type="RNAct" id="Q92529">
    <property type="molecule type" value="protein"/>
</dbReference>
<dbReference type="Bgee" id="ENSG00000148082">
    <property type="expression patterns" value="Expressed in Brodmann (1909) area 23 and 157 other cell types or tissues"/>
</dbReference>
<dbReference type="ExpressionAtlas" id="Q92529">
    <property type="expression patterns" value="baseline and differential"/>
</dbReference>
<dbReference type="GO" id="GO:0005829">
    <property type="term" value="C:cytosol"/>
    <property type="evidence" value="ECO:0000304"/>
    <property type="project" value="Reactome"/>
</dbReference>
<dbReference type="GO" id="GO:0005886">
    <property type="term" value="C:plasma membrane"/>
    <property type="evidence" value="ECO:0000318"/>
    <property type="project" value="GO_Central"/>
</dbReference>
<dbReference type="GO" id="GO:0001784">
    <property type="term" value="F:phosphotyrosine residue binding"/>
    <property type="evidence" value="ECO:0000353"/>
    <property type="project" value="CAFA"/>
</dbReference>
<dbReference type="GO" id="GO:0030971">
    <property type="term" value="F:receptor tyrosine kinase binding"/>
    <property type="evidence" value="ECO:0000318"/>
    <property type="project" value="GO_Central"/>
</dbReference>
<dbReference type="GO" id="GO:0007169">
    <property type="term" value="P:cell surface receptor protein tyrosine kinase signaling pathway"/>
    <property type="evidence" value="ECO:0000318"/>
    <property type="project" value="GO_Central"/>
</dbReference>
<dbReference type="GO" id="GO:0007417">
    <property type="term" value="P:central nervous system development"/>
    <property type="evidence" value="ECO:0000304"/>
    <property type="project" value="ProtInc"/>
</dbReference>
<dbReference type="GO" id="GO:0007173">
    <property type="term" value="P:epidermal growth factor receptor signaling pathway"/>
    <property type="evidence" value="ECO:0000304"/>
    <property type="project" value="ProtInc"/>
</dbReference>
<dbReference type="GO" id="GO:0035556">
    <property type="term" value="P:intracellular signal transduction"/>
    <property type="evidence" value="ECO:0007669"/>
    <property type="project" value="InterPro"/>
</dbReference>
<dbReference type="CDD" id="cd01209">
    <property type="entry name" value="PTB_Shc"/>
    <property type="match status" value="1"/>
</dbReference>
<dbReference type="CDD" id="cd09925">
    <property type="entry name" value="SH2_SHC"/>
    <property type="match status" value="1"/>
</dbReference>
<dbReference type="FunFam" id="2.30.29.30:FF:000036">
    <property type="entry name" value="SHC-transforming protein 1 isoform 3"/>
    <property type="match status" value="1"/>
</dbReference>
<dbReference type="FunFam" id="3.30.505.10:FF:000005">
    <property type="entry name" value="SHC-transforming protein 1 isoform 3"/>
    <property type="match status" value="1"/>
</dbReference>
<dbReference type="Gene3D" id="2.30.29.30">
    <property type="entry name" value="Pleckstrin-homology domain (PH domain)/Phosphotyrosine-binding domain (PTB)"/>
    <property type="match status" value="1"/>
</dbReference>
<dbReference type="Gene3D" id="3.30.505.10">
    <property type="entry name" value="SH2 domain"/>
    <property type="match status" value="1"/>
</dbReference>
<dbReference type="InterPro" id="IPR051235">
    <property type="entry name" value="CEP152/SHC-Transforming"/>
</dbReference>
<dbReference type="InterPro" id="IPR011993">
    <property type="entry name" value="PH-like_dom_sf"/>
</dbReference>
<dbReference type="InterPro" id="IPR006019">
    <property type="entry name" value="PID_Shc-like"/>
</dbReference>
<dbReference type="InterPro" id="IPR006020">
    <property type="entry name" value="PTB/PI_dom"/>
</dbReference>
<dbReference type="InterPro" id="IPR000980">
    <property type="entry name" value="SH2"/>
</dbReference>
<dbReference type="InterPro" id="IPR036860">
    <property type="entry name" value="SH2_dom_sf"/>
</dbReference>
<dbReference type="InterPro" id="IPR035676">
    <property type="entry name" value="SHC_SH2"/>
</dbReference>
<dbReference type="PANTHER" id="PTHR10337">
    <property type="entry name" value="SHC TRANSFORMING PROTEIN"/>
    <property type="match status" value="1"/>
</dbReference>
<dbReference type="PANTHER" id="PTHR10337:SF4">
    <property type="entry name" value="SHC-TRANSFORMING PROTEIN 3"/>
    <property type="match status" value="1"/>
</dbReference>
<dbReference type="Pfam" id="PF00640">
    <property type="entry name" value="PID"/>
    <property type="match status" value="1"/>
</dbReference>
<dbReference type="Pfam" id="PF00017">
    <property type="entry name" value="SH2"/>
    <property type="match status" value="1"/>
</dbReference>
<dbReference type="PRINTS" id="PR00401">
    <property type="entry name" value="SH2DOMAIN"/>
</dbReference>
<dbReference type="PRINTS" id="PR00629">
    <property type="entry name" value="SHCPIDOMAIN"/>
</dbReference>
<dbReference type="SMART" id="SM00462">
    <property type="entry name" value="PTB"/>
    <property type="match status" value="1"/>
</dbReference>
<dbReference type="SMART" id="SM00252">
    <property type="entry name" value="SH2"/>
    <property type="match status" value="1"/>
</dbReference>
<dbReference type="SUPFAM" id="SSF50729">
    <property type="entry name" value="PH domain-like"/>
    <property type="match status" value="1"/>
</dbReference>
<dbReference type="SUPFAM" id="SSF55550">
    <property type="entry name" value="SH2 domain"/>
    <property type="match status" value="1"/>
</dbReference>
<dbReference type="PROSITE" id="PS01179">
    <property type="entry name" value="PID"/>
    <property type="match status" value="1"/>
</dbReference>
<dbReference type="PROSITE" id="PS50001">
    <property type="entry name" value="SH2"/>
    <property type="match status" value="1"/>
</dbReference>
<name>SHC3_HUMAN</name>
<evidence type="ECO:0000250" key="1">
    <source>
        <dbReference type="UniProtKB" id="Q61120"/>
    </source>
</evidence>
<evidence type="ECO:0000255" key="2">
    <source>
        <dbReference type="PROSITE-ProRule" id="PRU00148"/>
    </source>
</evidence>
<evidence type="ECO:0000255" key="3">
    <source>
        <dbReference type="PROSITE-ProRule" id="PRU00191"/>
    </source>
</evidence>
<evidence type="ECO:0000256" key="4">
    <source>
        <dbReference type="SAM" id="MobiDB-lite"/>
    </source>
</evidence>
<evidence type="ECO:0000269" key="5">
    <source>
    </source>
</evidence>
<evidence type="ECO:0000269" key="6">
    <source>
    </source>
</evidence>
<evidence type="ECO:0000303" key="7">
    <source>
    </source>
</evidence>
<evidence type="ECO:0000303" key="8">
    <source>
    </source>
</evidence>
<evidence type="ECO:0000305" key="9"/>
<organism>
    <name type="scientific">Homo sapiens</name>
    <name type="common">Human</name>
    <dbReference type="NCBI Taxonomy" id="9606"/>
    <lineage>
        <taxon>Eukaryota</taxon>
        <taxon>Metazoa</taxon>
        <taxon>Chordata</taxon>
        <taxon>Craniata</taxon>
        <taxon>Vertebrata</taxon>
        <taxon>Euteleostomi</taxon>
        <taxon>Mammalia</taxon>
        <taxon>Eutheria</taxon>
        <taxon>Euarchontoglires</taxon>
        <taxon>Primates</taxon>
        <taxon>Haplorrhini</taxon>
        <taxon>Catarrhini</taxon>
        <taxon>Hominidae</taxon>
        <taxon>Homo</taxon>
    </lineage>
</organism>